<reference key="1">
    <citation type="journal article" date="2003" name="Nature">
        <title>The DNA sequence and analysis of human chromosome 6.</title>
        <authorList>
            <person name="Mungall A.J."/>
            <person name="Palmer S.A."/>
            <person name="Sims S.K."/>
            <person name="Edwards C.A."/>
            <person name="Ashurst J.L."/>
            <person name="Wilming L."/>
            <person name="Jones M.C."/>
            <person name="Horton R."/>
            <person name="Hunt S.E."/>
            <person name="Scott C.E."/>
            <person name="Gilbert J.G.R."/>
            <person name="Clamp M.E."/>
            <person name="Bethel G."/>
            <person name="Milne S."/>
            <person name="Ainscough R."/>
            <person name="Almeida J.P."/>
            <person name="Ambrose K.D."/>
            <person name="Andrews T.D."/>
            <person name="Ashwell R.I.S."/>
            <person name="Babbage A.K."/>
            <person name="Bagguley C.L."/>
            <person name="Bailey J."/>
            <person name="Banerjee R."/>
            <person name="Barker D.J."/>
            <person name="Barlow K.F."/>
            <person name="Bates K."/>
            <person name="Beare D.M."/>
            <person name="Beasley H."/>
            <person name="Beasley O."/>
            <person name="Bird C.P."/>
            <person name="Blakey S.E."/>
            <person name="Bray-Allen S."/>
            <person name="Brook J."/>
            <person name="Brown A.J."/>
            <person name="Brown J.Y."/>
            <person name="Burford D.C."/>
            <person name="Burrill W."/>
            <person name="Burton J."/>
            <person name="Carder C."/>
            <person name="Carter N.P."/>
            <person name="Chapman J.C."/>
            <person name="Clark S.Y."/>
            <person name="Clark G."/>
            <person name="Clee C.M."/>
            <person name="Clegg S."/>
            <person name="Cobley V."/>
            <person name="Collier R.E."/>
            <person name="Collins J.E."/>
            <person name="Colman L.K."/>
            <person name="Corby N.R."/>
            <person name="Coville G.J."/>
            <person name="Culley K.M."/>
            <person name="Dhami P."/>
            <person name="Davies J."/>
            <person name="Dunn M."/>
            <person name="Earthrowl M.E."/>
            <person name="Ellington A.E."/>
            <person name="Evans K.A."/>
            <person name="Faulkner L."/>
            <person name="Francis M.D."/>
            <person name="Frankish A."/>
            <person name="Frankland J."/>
            <person name="French L."/>
            <person name="Garner P."/>
            <person name="Garnett J."/>
            <person name="Ghori M.J."/>
            <person name="Gilby L.M."/>
            <person name="Gillson C.J."/>
            <person name="Glithero R.J."/>
            <person name="Grafham D.V."/>
            <person name="Grant M."/>
            <person name="Gribble S."/>
            <person name="Griffiths C."/>
            <person name="Griffiths M.N.D."/>
            <person name="Hall R."/>
            <person name="Halls K.S."/>
            <person name="Hammond S."/>
            <person name="Harley J.L."/>
            <person name="Hart E.A."/>
            <person name="Heath P.D."/>
            <person name="Heathcott R."/>
            <person name="Holmes S.J."/>
            <person name="Howden P.J."/>
            <person name="Howe K.L."/>
            <person name="Howell G.R."/>
            <person name="Huckle E."/>
            <person name="Humphray S.J."/>
            <person name="Humphries M.D."/>
            <person name="Hunt A.R."/>
            <person name="Johnson C.M."/>
            <person name="Joy A.A."/>
            <person name="Kay M."/>
            <person name="Keenan S.J."/>
            <person name="Kimberley A.M."/>
            <person name="King A."/>
            <person name="Laird G.K."/>
            <person name="Langford C."/>
            <person name="Lawlor S."/>
            <person name="Leongamornlert D.A."/>
            <person name="Leversha M."/>
            <person name="Lloyd C.R."/>
            <person name="Lloyd D.M."/>
            <person name="Loveland J.E."/>
            <person name="Lovell J."/>
            <person name="Martin S."/>
            <person name="Mashreghi-Mohammadi M."/>
            <person name="Maslen G.L."/>
            <person name="Matthews L."/>
            <person name="McCann O.T."/>
            <person name="McLaren S.J."/>
            <person name="McLay K."/>
            <person name="McMurray A."/>
            <person name="Moore M.J.F."/>
            <person name="Mullikin J.C."/>
            <person name="Niblett D."/>
            <person name="Nickerson T."/>
            <person name="Novik K.L."/>
            <person name="Oliver K."/>
            <person name="Overton-Larty E.K."/>
            <person name="Parker A."/>
            <person name="Patel R."/>
            <person name="Pearce A.V."/>
            <person name="Peck A.I."/>
            <person name="Phillimore B.J.C.T."/>
            <person name="Phillips S."/>
            <person name="Plumb R.W."/>
            <person name="Porter K.M."/>
            <person name="Ramsey Y."/>
            <person name="Ranby S.A."/>
            <person name="Rice C.M."/>
            <person name="Ross M.T."/>
            <person name="Searle S.M."/>
            <person name="Sehra H.K."/>
            <person name="Sheridan E."/>
            <person name="Skuce C.D."/>
            <person name="Smith S."/>
            <person name="Smith M."/>
            <person name="Spraggon L."/>
            <person name="Squares S.L."/>
            <person name="Steward C.A."/>
            <person name="Sycamore N."/>
            <person name="Tamlyn-Hall G."/>
            <person name="Tester J."/>
            <person name="Theaker A.J."/>
            <person name="Thomas D.W."/>
            <person name="Thorpe A."/>
            <person name="Tracey A."/>
            <person name="Tromans A."/>
            <person name="Tubby B."/>
            <person name="Wall M."/>
            <person name="Wallis J.M."/>
            <person name="West A.P."/>
            <person name="White S.S."/>
            <person name="Whitehead S.L."/>
            <person name="Whittaker H."/>
            <person name="Wild A."/>
            <person name="Willey D.J."/>
            <person name="Wilmer T.E."/>
            <person name="Wood J.M."/>
            <person name="Wray P.W."/>
            <person name="Wyatt J.C."/>
            <person name="Young L."/>
            <person name="Younger R.M."/>
            <person name="Bentley D.R."/>
            <person name="Coulson A."/>
            <person name="Durbin R.M."/>
            <person name="Hubbard T."/>
            <person name="Sulston J.E."/>
            <person name="Dunham I."/>
            <person name="Rogers J."/>
            <person name="Beck S."/>
        </authorList>
    </citation>
    <scope>NUCLEOTIDE SEQUENCE [LARGE SCALE GENOMIC DNA]</scope>
</reference>
<reference key="2">
    <citation type="journal article" date="2004" name="Nat. Genet.">
        <title>Complete sequencing and characterization of 21,243 full-length human cDNAs.</title>
        <authorList>
            <person name="Ota T."/>
            <person name="Suzuki Y."/>
            <person name="Nishikawa T."/>
            <person name="Otsuki T."/>
            <person name="Sugiyama T."/>
            <person name="Irie R."/>
            <person name="Wakamatsu A."/>
            <person name="Hayashi K."/>
            <person name="Sato H."/>
            <person name="Nagai K."/>
            <person name="Kimura K."/>
            <person name="Makita H."/>
            <person name="Sekine M."/>
            <person name="Obayashi M."/>
            <person name="Nishi T."/>
            <person name="Shibahara T."/>
            <person name="Tanaka T."/>
            <person name="Ishii S."/>
            <person name="Yamamoto J."/>
            <person name="Saito K."/>
            <person name="Kawai Y."/>
            <person name="Isono Y."/>
            <person name="Nakamura Y."/>
            <person name="Nagahari K."/>
            <person name="Murakami K."/>
            <person name="Yasuda T."/>
            <person name="Iwayanagi T."/>
            <person name="Wagatsuma M."/>
            <person name="Shiratori A."/>
            <person name="Sudo H."/>
            <person name="Hosoiri T."/>
            <person name="Kaku Y."/>
            <person name="Kodaira H."/>
            <person name="Kondo H."/>
            <person name="Sugawara M."/>
            <person name="Takahashi M."/>
            <person name="Kanda K."/>
            <person name="Yokoi T."/>
            <person name="Furuya T."/>
            <person name="Kikkawa E."/>
            <person name="Omura Y."/>
            <person name="Abe K."/>
            <person name="Kamihara K."/>
            <person name="Katsuta N."/>
            <person name="Sato K."/>
            <person name="Tanikawa M."/>
            <person name="Yamazaki M."/>
            <person name="Ninomiya K."/>
            <person name="Ishibashi T."/>
            <person name="Yamashita H."/>
            <person name="Murakawa K."/>
            <person name="Fujimori K."/>
            <person name="Tanai H."/>
            <person name="Kimata M."/>
            <person name="Watanabe M."/>
            <person name="Hiraoka S."/>
            <person name="Chiba Y."/>
            <person name="Ishida S."/>
            <person name="Ono Y."/>
            <person name="Takiguchi S."/>
            <person name="Watanabe S."/>
            <person name="Yosida M."/>
            <person name="Hotuta T."/>
            <person name="Kusano J."/>
            <person name="Kanehori K."/>
            <person name="Takahashi-Fujii A."/>
            <person name="Hara H."/>
            <person name="Tanase T.-O."/>
            <person name="Nomura Y."/>
            <person name="Togiya S."/>
            <person name="Komai F."/>
            <person name="Hara R."/>
            <person name="Takeuchi K."/>
            <person name="Arita M."/>
            <person name="Imose N."/>
            <person name="Musashino K."/>
            <person name="Yuuki H."/>
            <person name="Oshima A."/>
            <person name="Sasaki N."/>
            <person name="Aotsuka S."/>
            <person name="Yoshikawa Y."/>
            <person name="Matsunawa H."/>
            <person name="Ichihara T."/>
            <person name="Shiohata N."/>
            <person name="Sano S."/>
            <person name="Moriya S."/>
            <person name="Momiyama H."/>
            <person name="Satoh N."/>
            <person name="Takami S."/>
            <person name="Terashima Y."/>
            <person name="Suzuki O."/>
            <person name="Nakagawa S."/>
            <person name="Senoh A."/>
            <person name="Mizoguchi H."/>
            <person name="Goto Y."/>
            <person name="Shimizu F."/>
            <person name="Wakebe H."/>
            <person name="Hishigaki H."/>
            <person name="Watanabe T."/>
            <person name="Sugiyama A."/>
            <person name="Takemoto M."/>
            <person name="Kawakami B."/>
            <person name="Yamazaki M."/>
            <person name="Watanabe K."/>
            <person name="Kumagai A."/>
            <person name="Itakura S."/>
            <person name="Fukuzumi Y."/>
            <person name="Fujimori Y."/>
            <person name="Komiyama M."/>
            <person name="Tashiro H."/>
            <person name="Tanigami A."/>
            <person name="Fujiwara T."/>
            <person name="Ono T."/>
            <person name="Yamada K."/>
            <person name="Fujii Y."/>
            <person name="Ozaki K."/>
            <person name="Hirao M."/>
            <person name="Ohmori Y."/>
            <person name="Kawabata A."/>
            <person name="Hikiji T."/>
            <person name="Kobatake N."/>
            <person name="Inagaki H."/>
            <person name="Ikema Y."/>
            <person name="Okamoto S."/>
            <person name="Okitani R."/>
            <person name="Kawakami T."/>
            <person name="Noguchi S."/>
            <person name="Itoh T."/>
            <person name="Shigeta K."/>
            <person name="Senba T."/>
            <person name="Matsumura K."/>
            <person name="Nakajima Y."/>
            <person name="Mizuno T."/>
            <person name="Morinaga M."/>
            <person name="Sasaki M."/>
            <person name="Togashi T."/>
            <person name="Oyama M."/>
            <person name="Hata H."/>
            <person name="Watanabe M."/>
            <person name="Komatsu T."/>
            <person name="Mizushima-Sugano J."/>
            <person name="Satoh T."/>
            <person name="Shirai Y."/>
            <person name="Takahashi Y."/>
            <person name="Nakagawa K."/>
            <person name="Okumura K."/>
            <person name="Nagase T."/>
            <person name="Nomura N."/>
            <person name="Kikuchi H."/>
            <person name="Masuho Y."/>
            <person name="Yamashita R."/>
            <person name="Nakai K."/>
            <person name="Yada T."/>
            <person name="Nakamura Y."/>
            <person name="Ohara O."/>
            <person name="Isogai T."/>
            <person name="Sugano S."/>
        </authorList>
    </citation>
    <scope>NUCLEOTIDE SEQUENCE [LARGE SCALE MRNA] OF 198-366</scope>
    <source>
        <tissue>Caudate nucleus</tissue>
    </source>
</reference>
<accession>Q5JXM2</accession>
<accession>Q6ZSU5</accession>
<gene>
    <name type="primary">METTL24</name>
    <name type="synonym">C6orf186</name>
</gene>
<protein>
    <recommendedName>
        <fullName evidence="3">Probable methyltransferase-like protein 24</fullName>
        <ecNumber evidence="3">2.1.1.-</ecNumber>
    </recommendedName>
</protein>
<name>MET24_HUMAN</name>
<organism>
    <name type="scientific">Homo sapiens</name>
    <name type="common">Human</name>
    <dbReference type="NCBI Taxonomy" id="9606"/>
    <lineage>
        <taxon>Eukaryota</taxon>
        <taxon>Metazoa</taxon>
        <taxon>Chordata</taxon>
        <taxon>Craniata</taxon>
        <taxon>Vertebrata</taxon>
        <taxon>Euteleostomi</taxon>
        <taxon>Mammalia</taxon>
        <taxon>Eutheria</taxon>
        <taxon>Euarchontoglires</taxon>
        <taxon>Primates</taxon>
        <taxon>Haplorrhini</taxon>
        <taxon>Catarrhini</taxon>
        <taxon>Hominidae</taxon>
        <taxon>Homo</taxon>
    </lineage>
</organism>
<proteinExistence type="evidence at transcript level"/>
<feature type="signal peptide" evidence="1">
    <location>
        <begin position="1"/>
        <end position="29"/>
    </location>
</feature>
<feature type="chain" id="PRO_0000343743" description="Probable methyltransferase-like protein 24">
    <location>
        <begin position="30"/>
        <end position="366"/>
    </location>
</feature>
<feature type="region of interest" description="Disordered" evidence="2">
    <location>
        <begin position="36"/>
        <end position="110"/>
    </location>
</feature>
<feature type="compositionally biased region" description="Pro residues" evidence="2">
    <location>
        <begin position="44"/>
        <end position="63"/>
    </location>
</feature>
<feature type="compositionally biased region" description="Low complexity" evidence="2">
    <location>
        <begin position="91"/>
        <end position="100"/>
    </location>
</feature>
<feature type="sequence variant" id="VAR_044502" description="In dbSNP:rs2334321.">
    <original>L</original>
    <variation>F</variation>
    <location>
        <position position="281"/>
    </location>
</feature>
<feature type="sequence conflict" description="In Ref. 2; BAC86851." evidence="3" ref="2">
    <original>G</original>
    <variation>V</variation>
    <location>
        <position position="308"/>
    </location>
</feature>
<evidence type="ECO:0000255" key="1"/>
<evidence type="ECO:0000256" key="2">
    <source>
        <dbReference type="SAM" id="MobiDB-lite"/>
    </source>
</evidence>
<evidence type="ECO:0000305" key="3"/>
<dbReference type="EC" id="2.1.1.-" evidence="3"/>
<dbReference type="EMBL" id="AL445068">
    <property type="status" value="NOT_ANNOTATED_CDS"/>
    <property type="molecule type" value="Genomic_DNA"/>
</dbReference>
<dbReference type="EMBL" id="AL050350">
    <property type="status" value="NOT_ANNOTATED_CDS"/>
    <property type="molecule type" value="Genomic_DNA"/>
</dbReference>
<dbReference type="EMBL" id="AK127146">
    <property type="protein sequence ID" value="BAC86851.1"/>
    <property type="molecule type" value="mRNA"/>
</dbReference>
<dbReference type="CCDS" id="CCDS43489.1"/>
<dbReference type="RefSeq" id="NP_001116836.1">
    <property type="nucleotide sequence ID" value="NM_001123364.3"/>
</dbReference>
<dbReference type="BioGRID" id="608890">
    <property type="interactions" value="1"/>
</dbReference>
<dbReference type="FunCoup" id="Q5JXM2">
    <property type="interactions" value="4"/>
</dbReference>
<dbReference type="STRING" id="9606.ENSP00000344071"/>
<dbReference type="GlyCosmos" id="Q5JXM2">
    <property type="glycosylation" value="1 site, 1 glycan"/>
</dbReference>
<dbReference type="GlyGen" id="Q5JXM2">
    <property type="glycosylation" value="1 site, 1 O-linked glycan (1 site)"/>
</dbReference>
<dbReference type="iPTMnet" id="Q5JXM2"/>
<dbReference type="PhosphoSitePlus" id="Q5JXM2"/>
<dbReference type="BioMuta" id="METTL24"/>
<dbReference type="DMDM" id="205830266"/>
<dbReference type="jPOST" id="Q5JXM2"/>
<dbReference type="MassIVE" id="Q5JXM2"/>
<dbReference type="PaxDb" id="9606-ENSP00000344071"/>
<dbReference type="Antibodypedia" id="49566">
    <property type="antibodies" value="62 antibodies from 10 providers"/>
</dbReference>
<dbReference type="DNASU" id="728464"/>
<dbReference type="Ensembl" id="ENST00000338882.5">
    <property type="protein sequence ID" value="ENSP00000344071.4"/>
    <property type="gene ID" value="ENSG00000053328.9"/>
</dbReference>
<dbReference type="GeneID" id="728464"/>
<dbReference type="KEGG" id="hsa:728464"/>
<dbReference type="MANE-Select" id="ENST00000338882.5">
    <property type="protein sequence ID" value="ENSP00000344071.4"/>
    <property type="RefSeq nucleotide sequence ID" value="NM_001123364.3"/>
    <property type="RefSeq protein sequence ID" value="NP_001116836.1"/>
</dbReference>
<dbReference type="UCSC" id="uc010kdu.2">
    <property type="organism name" value="human"/>
</dbReference>
<dbReference type="AGR" id="HGNC:21566"/>
<dbReference type="CTD" id="728464"/>
<dbReference type="DisGeNET" id="728464"/>
<dbReference type="GeneCards" id="METTL24"/>
<dbReference type="HGNC" id="HGNC:21566">
    <property type="gene designation" value="METTL24"/>
</dbReference>
<dbReference type="HPA" id="ENSG00000053328">
    <property type="expression patterns" value="Tissue enhanced (smooth)"/>
</dbReference>
<dbReference type="neXtProt" id="NX_Q5JXM2"/>
<dbReference type="OpenTargets" id="ENSG00000053328"/>
<dbReference type="PharmGKB" id="PA134906793"/>
<dbReference type="VEuPathDB" id="HostDB:ENSG00000053328"/>
<dbReference type="eggNOG" id="ENOG502QRD5">
    <property type="taxonomic scope" value="Eukaryota"/>
</dbReference>
<dbReference type="GeneTree" id="ENSGT00390000002881"/>
<dbReference type="HOGENOM" id="CLU_061403_0_0_1"/>
<dbReference type="InParanoid" id="Q5JXM2"/>
<dbReference type="OMA" id="TQIACDH"/>
<dbReference type="OrthoDB" id="10006218at2759"/>
<dbReference type="PAN-GO" id="Q5JXM2">
    <property type="GO annotations" value="0 GO annotations based on evolutionary models"/>
</dbReference>
<dbReference type="PhylomeDB" id="Q5JXM2"/>
<dbReference type="TreeFam" id="TF330614"/>
<dbReference type="PathwayCommons" id="Q5JXM2"/>
<dbReference type="BioGRID-ORCS" id="728464">
    <property type="hits" value="11 hits in 1146 CRISPR screens"/>
</dbReference>
<dbReference type="ChiTaRS" id="METTL24">
    <property type="organism name" value="human"/>
</dbReference>
<dbReference type="GenomeRNAi" id="728464"/>
<dbReference type="Pharos" id="Q5JXM2">
    <property type="development level" value="Tdark"/>
</dbReference>
<dbReference type="PRO" id="PR:Q5JXM2"/>
<dbReference type="Proteomes" id="UP000005640">
    <property type="component" value="Chromosome 6"/>
</dbReference>
<dbReference type="RNAct" id="Q5JXM2">
    <property type="molecule type" value="protein"/>
</dbReference>
<dbReference type="Bgee" id="ENSG00000053328">
    <property type="expression patterns" value="Expressed in smooth muscle tissue and 104 other cell types or tissues"/>
</dbReference>
<dbReference type="GO" id="GO:0005576">
    <property type="term" value="C:extracellular region"/>
    <property type="evidence" value="ECO:0007669"/>
    <property type="project" value="UniProtKB-SubCell"/>
</dbReference>
<dbReference type="GO" id="GO:0008168">
    <property type="term" value="F:methyltransferase activity"/>
    <property type="evidence" value="ECO:0007669"/>
    <property type="project" value="UniProtKB-KW"/>
</dbReference>
<dbReference type="GO" id="GO:0032259">
    <property type="term" value="P:methylation"/>
    <property type="evidence" value="ECO:0007669"/>
    <property type="project" value="UniProtKB-KW"/>
</dbReference>
<dbReference type="InterPro" id="IPR025714">
    <property type="entry name" value="Methyltranfer_dom"/>
</dbReference>
<dbReference type="InterPro" id="IPR026913">
    <property type="entry name" value="METTL24"/>
</dbReference>
<dbReference type="PANTHER" id="PTHR32026">
    <property type="entry name" value="METHYLTRANSFERASE-LIKE PROTEIN 24"/>
    <property type="match status" value="1"/>
</dbReference>
<dbReference type="PANTHER" id="PTHR32026:SF10">
    <property type="entry name" value="METHYLTRANSFERASE-LIKE PROTEIN 24-RELATED"/>
    <property type="match status" value="1"/>
</dbReference>
<dbReference type="Pfam" id="PF13383">
    <property type="entry name" value="Methyltransf_22"/>
    <property type="match status" value="1"/>
</dbReference>
<keyword id="KW-0489">Methyltransferase</keyword>
<keyword id="KW-1185">Reference proteome</keyword>
<keyword id="KW-0964">Secreted</keyword>
<keyword id="KW-0732">Signal</keyword>
<keyword id="KW-0808">Transferase</keyword>
<sequence length="366" mass="41330">MARERPPGRGCGVLRRCLLGAVLLFGLRLCAELRRAGPGSPTRSAPPGPAWRPPGPHLPPAPGQPRGASRRQVTYVRSGRRAPPGGGGSGTPEPGCCAPRGRPRRKGPRWHIDLQPWAGSAQSLDEEAWRFLRYISTTQIACNHMNTDSLATDSSPTHKPWSVCLDDRFNLAHQIRNKQCRLYSLGLGSDDTHFEVSMANNGCEVHRFDPSVKSAHILESQHLWYHRLSIDWRDPHPAVAAQKPHSNTRKLGSILNEFGHHKIDVLKADLESAEWKVLENLILEDVLEQIGQLIFEIHLHWPGFEVSGSDSSVVRFWYSLLKELEQKDFRLFHSYKDLSKPQLFLKKDIFNASSCYTLSWVNTRWK</sequence>
<comment type="function">
    <text evidence="3">Probable methyltransferase.</text>
</comment>
<comment type="subcellular location">
    <subcellularLocation>
        <location evidence="3">Secreted</location>
    </subcellularLocation>
</comment>
<comment type="similarity">
    <text evidence="3">Belongs to the methyltransferase superfamily.</text>
</comment>